<keyword id="KW-0002">3D-structure</keyword>
<keyword id="KW-0025">Alternative splicing</keyword>
<keyword id="KW-0966">Cell projection</keyword>
<keyword id="KW-0963">Cytoplasm</keyword>
<keyword id="KW-0221">Differentiation</keyword>
<keyword id="KW-0378">Hydrolase</keyword>
<keyword id="KW-0391">Immunity</keyword>
<keyword id="KW-0399">Innate immunity</keyword>
<keyword id="KW-0496">Mitochondrion</keyword>
<keyword id="KW-0520">NAD</keyword>
<keyword id="KW-0524">Neurogenesis</keyword>
<keyword id="KW-0597">Phosphoprotein</keyword>
<keyword id="KW-1267">Proteomics identification</keyword>
<keyword id="KW-1185">Reference proteome</keyword>
<keyword id="KW-0677">Repeat</keyword>
<keyword id="KW-0770">Synapse</keyword>
<keyword id="KW-0809">Transit peptide</keyword>
<protein>
    <recommendedName>
        <fullName evidence="33">NAD(+) hydrolase SARM1</fullName>
        <shortName evidence="33">NADase SARM1</shortName>
        <shortName evidence="30">hSARM1</shortName>
        <ecNumber evidence="14 16 17 19 20 24">3.2.2.6</ecNumber>
    </recommendedName>
    <alternativeName>
        <fullName evidence="33">NADP(+) hydrolase SARM1</fullName>
        <ecNumber evidence="15">3.2.2.-</ecNumber>
    </alternativeName>
    <alternativeName>
        <fullName evidence="25">Sterile alpha and Armadillo repeat protein</fullName>
    </alternativeName>
    <alternativeName>
        <fullName evidence="28 32">Sterile alpha and TIR motif-containing protein 1</fullName>
    </alternativeName>
    <alternativeName>
        <fullName evidence="27">Sterile alpha motif domain-containing protein 2</fullName>
        <shortName evidence="27">MyD88-5</shortName>
        <shortName evidence="37">SAM domain-containing protein 2</shortName>
    </alternativeName>
    <alternativeName>
        <fullName evidence="26">Tir-1 homolog</fullName>
        <shortName evidence="29">HsTIR</shortName>
    </alternativeName>
</protein>
<evidence type="ECO:0000250" key="1">
    <source>
        <dbReference type="UniProtKB" id="Q6PDS3"/>
    </source>
</evidence>
<evidence type="ECO:0000255" key="2"/>
<evidence type="ECO:0000255" key="3">
    <source>
        <dbReference type="PROSITE-ProRule" id="PRU00184"/>
    </source>
</evidence>
<evidence type="ECO:0000255" key="4">
    <source>
        <dbReference type="PROSITE-ProRule" id="PRU00204"/>
    </source>
</evidence>
<evidence type="ECO:0000256" key="5">
    <source>
        <dbReference type="SAM" id="MobiDB-lite"/>
    </source>
</evidence>
<evidence type="ECO:0000269" key="6">
    <source>
    </source>
</evidence>
<evidence type="ECO:0000269" key="7">
    <source>
    </source>
</evidence>
<evidence type="ECO:0000269" key="8">
    <source>
    </source>
</evidence>
<evidence type="ECO:0000269" key="9">
    <source>
    </source>
</evidence>
<evidence type="ECO:0000269" key="10">
    <source>
    </source>
</evidence>
<evidence type="ECO:0000269" key="11">
    <source>
    </source>
</evidence>
<evidence type="ECO:0000269" key="12">
    <source>
    </source>
</evidence>
<evidence type="ECO:0000269" key="13">
    <source>
    </source>
</evidence>
<evidence type="ECO:0000269" key="14">
    <source>
    </source>
</evidence>
<evidence type="ECO:0000269" key="15">
    <source>
    </source>
</evidence>
<evidence type="ECO:0000269" key="16">
    <source>
    </source>
</evidence>
<evidence type="ECO:0000269" key="17">
    <source>
    </source>
</evidence>
<evidence type="ECO:0000269" key="18">
    <source>
    </source>
</evidence>
<evidence type="ECO:0000269" key="19">
    <source>
    </source>
</evidence>
<evidence type="ECO:0000269" key="20">
    <source>
    </source>
</evidence>
<evidence type="ECO:0000269" key="21">
    <source>
    </source>
</evidence>
<evidence type="ECO:0000269" key="22">
    <source>
    </source>
</evidence>
<evidence type="ECO:0000269" key="23">
    <source>
    </source>
</evidence>
<evidence type="ECO:0000269" key="24">
    <source>
    </source>
</evidence>
<evidence type="ECO:0000303" key="25">
    <source>
    </source>
</evidence>
<evidence type="ECO:0000303" key="26">
    <source>
    </source>
</evidence>
<evidence type="ECO:0000303" key="27">
    <source>
    </source>
</evidence>
<evidence type="ECO:0000303" key="28">
    <source>
    </source>
</evidence>
<evidence type="ECO:0000303" key="29">
    <source>
    </source>
</evidence>
<evidence type="ECO:0000303" key="30">
    <source>
    </source>
</evidence>
<evidence type="ECO:0000303" key="31">
    <source>
    </source>
</evidence>
<evidence type="ECO:0000303" key="32">
    <source ref="2"/>
</evidence>
<evidence type="ECO:0000305" key="33"/>
<evidence type="ECO:0000305" key="34">
    <source>
    </source>
</evidence>
<evidence type="ECO:0000305" key="35">
    <source>
    </source>
</evidence>
<evidence type="ECO:0000305" key="36">
    <source>
    </source>
</evidence>
<evidence type="ECO:0000312" key="37">
    <source>
        <dbReference type="HGNC" id="HGNC:17074"/>
    </source>
</evidence>
<evidence type="ECO:0007744" key="38">
    <source>
        <dbReference type="PDB" id="6O0Q"/>
    </source>
</evidence>
<evidence type="ECO:0007744" key="39">
    <source>
        <dbReference type="PDB" id="6O0R"/>
    </source>
</evidence>
<evidence type="ECO:0007744" key="40">
    <source>
        <dbReference type="PDB" id="6O0S"/>
    </source>
</evidence>
<evidence type="ECO:0007744" key="41">
    <source>
        <dbReference type="PDB" id="6O0T"/>
    </source>
</evidence>
<evidence type="ECO:0007744" key="42">
    <source>
        <dbReference type="PDB" id="6O0U"/>
    </source>
</evidence>
<evidence type="ECO:0007744" key="43">
    <source>
        <dbReference type="PDB" id="6O0V"/>
    </source>
</evidence>
<evidence type="ECO:0007744" key="44">
    <source>
        <dbReference type="PDB" id="6O1B"/>
    </source>
</evidence>
<evidence type="ECO:0007744" key="45">
    <source>
        <dbReference type="PDB" id="6QWV"/>
    </source>
</evidence>
<evidence type="ECO:0007744" key="46">
    <source>
        <dbReference type="PDB" id="6WPK"/>
    </source>
</evidence>
<evidence type="ECO:0007744" key="47">
    <source>
        <dbReference type="PDB" id="7CM6"/>
    </source>
</evidence>
<evidence type="ECO:0007744" key="48">
    <source>
        <dbReference type="PDB" id="7CM7"/>
    </source>
</evidence>
<evidence type="ECO:0007829" key="49">
    <source>
        <dbReference type="PDB" id="6O0V"/>
    </source>
</evidence>
<evidence type="ECO:0007829" key="50">
    <source>
        <dbReference type="PDB" id="6QWV"/>
    </source>
</evidence>
<evidence type="ECO:0007829" key="51">
    <source>
        <dbReference type="PDB" id="7ANW"/>
    </source>
</evidence>
<evidence type="ECO:0007829" key="52">
    <source>
        <dbReference type="PDB" id="7CM5"/>
    </source>
</evidence>
<evidence type="ECO:0007829" key="53">
    <source>
        <dbReference type="PDB" id="7CM7"/>
    </source>
</evidence>
<evidence type="ECO:0007829" key="54">
    <source>
        <dbReference type="PDB" id="7DJT"/>
    </source>
</evidence>
<evidence type="ECO:0007829" key="55">
    <source>
        <dbReference type="PDB" id="7NAH"/>
    </source>
</evidence>
<evidence type="ECO:0007829" key="56">
    <source>
        <dbReference type="PDB" id="7NAJ"/>
    </source>
</evidence>
<accession>Q6SZW1</accession>
<accession>O60277</accession>
<accession>Q7LGG3</accession>
<accession>Q9NXY5</accession>
<organism>
    <name type="scientific">Homo sapiens</name>
    <name type="common">Human</name>
    <dbReference type="NCBI Taxonomy" id="9606"/>
    <lineage>
        <taxon>Eukaryota</taxon>
        <taxon>Metazoa</taxon>
        <taxon>Chordata</taxon>
        <taxon>Craniata</taxon>
        <taxon>Vertebrata</taxon>
        <taxon>Euteleostomi</taxon>
        <taxon>Mammalia</taxon>
        <taxon>Eutheria</taxon>
        <taxon>Euarchontoglires</taxon>
        <taxon>Primates</taxon>
        <taxon>Haplorrhini</taxon>
        <taxon>Catarrhini</taxon>
        <taxon>Hominidae</taxon>
        <taxon>Homo</taxon>
    </lineage>
</organism>
<reference key="1">
    <citation type="journal article" date="2001" name="Genomics">
        <title>A novel human gene (SARM) at chromosome 17q11 encodes a protein with a SAM motif and structural similarity to Armadillo/beta-catenin that is conserved in mouse, Drosophila, and Caenorhabditis elegans.</title>
        <authorList>
            <person name="Mink M."/>
            <person name="Fogelgren B."/>
            <person name="Olszewski K."/>
            <person name="Maroy P."/>
            <person name="Csiszar K."/>
        </authorList>
    </citation>
    <scope>NUCLEOTIDE SEQUENCE [MRNA] (ISOFORM 2)</scope>
    <scope>TISSUE SPECIFICITY</scope>
    <source>
        <tissue>Brain</tissue>
    </source>
</reference>
<reference key="2">
    <citation type="submission" date="2003-10" db="EMBL/GenBank/DDBJ databases">
        <title>SARM1 isoforms nucleotide sequence.</title>
        <authorList>
            <person name="Bousson J.-C."/>
            <person name="Casteran C."/>
            <person name="Tiraby G."/>
        </authorList>
    </citation>
    <scope>NUCLEOTIDE SEQUENCE [MRNA] (ISOFORM 1)</scope>
</reference>
<reference key="3">
    <citation type="journal article" date="1998" name="DNA Res.">
        <title>Prediction of the coding sequences of unidentified human genes. IX. The complete sequences of 100 new cDNA clones from brain which can code for large proteins in vitro.</title>
        <authorList>
            <person name="Nagase T."/>
            <person name="Ishikawa K."/>
            <person name="Miyajima N."/>
            <person name="Tanaka A."/>
            <person name="Kotani H."/>
            <person name="Nomura N."/>
            <person name="Ohara O."/>
        </authorList>
    </citation>
    <scope>NUCLEOTIDE SEQUENCE [LARGE SCALE MRNA] OF 127-724</scope>
    <source>
        <tissue>Brain</tissue>
    </source>
</reference>
<reference key="4">
    <citation type="journal article" date="2004" name="Proc. Natl. Acad. Sci. U.S.A.">
        <title>Requirement for a conserved Toll/interleukin-1 resistance domain protein in the Caenorhabditis elegans immune response.</title>
        <authorList>
            <person name="Liberati N.T."/>
            <person name="Fitzgerald K.A."/>
            <person name="Kim D.H."/>
            <person name="Feinbaum R."/>
            <person name="Golenbock D.T."/>
            <person name="Ausubel F.M."/>
        </authorList>
    </citation>
    <scope>FUNCTION</scope>
</reference>
<reference key="5">
    <citation type="journal article" date="2006" name="Nat. Immunol.">
        <title>The human adaptor SARM negatively regulates adaptor protein TRIF-dependent Toll-like receptor signaling.</title>
        <authorList>
            <person name="Carty M."/>
            <person name="Goodbody R."/>
            <person name="Schroeder M."/>
            <person name="Stack J."/>
            <person name="Moynagh P.N."/>
            <person name="Bowie A.G."/>
        </authorList>
    </citation>
    <scope>FUNCTION</scope>
    <scope>INTERACTION WITH TICAM1</scope>
</reference>
<reference key="6">
    <citation type="journal article" date="2006" name="Nat. Immunol.">
        <title>DisSARMing Toll-like receptor signaling.</title>
        <authorList>
            <person name="O'Neill L.A.J."/>
        </authorList>
    </citation>
    <scope>REVIEW</scope>
</reference>
<reference key="7">
    <citation type="journal article" date="2007" name="J. Exp. Med.">
        <title>MyD88-5 links mitochondria, microtubules, and JNK3 in neurons and regulates neuronal survival.</title>
        <authorList>
            <person name="Kim Y."/>
            <person name="Zhou P."/>
            <person name="Qian L."/>
            <person name="Chuang J.Z."/>
            <person name="Lee J."/>
            <person name="Li C."/>
            <person name="Iadecola C."/>
            <person name="Nathan C."/>
            <person name="Ding A."/>
        </authorList>
    </citation>
    <scope>TISSUE SPECIFICITY</scope>
</reference>
<reference key="8">
    <citation type="journal article" date="2007" name="Sci. STKE">
        <title>Studies of SARM1 uncover similarities between immune and neuronal responses to danger.</title>
        <authorList>
            <person name="Dalod M."/>
        </authorList>
    </citation>
    <scope>REVIEW</scope>
</reference>
<reference key="9">
    <citation type="journal article" date="2010" name="Eur. J. Immunol.">
        <title>SARM inhibits both TRIF- and MyD88-mediated AP-1 activation.</title>
        <authorList>
            <person name="Peng J."/>
            <person name="Yuan Q."/>
            <person name="Lin B."/>
            <person name="Panneerselvam P."/>
            <person name="Wang X."/>
            <person name="Luan X.L."/>
            <person name="Lim S.K."/>
            <person name="Leung B.P."/>
            <person name="Ho B."/>
            <person name="Ding J.L."/>
        </authorList>
    </citation>
    <scope>FUNCTION</scope>
    <scope>SUBCELLULAR LOCATION</scope>
    <scope>INDUCTION</scope>
</reference>
<reference key="10">
    <citation type="journal article" date="2012" name="Biochem. J.">
        <title>Targeting of pro-apoptotic TLR adaptor SARM to mitochondria: definition of the critical region and residues in the signal sequence.</title>
        <authorList>
            <person name="Panneerselvam P."/>
            <person name="Singh L.P."/>
            <person name="Ho B."/>
            <person name="Chen J."/>
            <person name="Ding J.L."/>
        </authorList>
    </citation>
    <scope>SUBCELLULAR LOCATION</scope>
    <scope>MITOCHONDRIAL TRANSIT PEPTIDE CLEAVAGE SITE</scope>
    <scope>MUTAGENESIS OF LYS-11; ARG-14; ARG-22 AND ARG-27</scope>
</reference>
<reference key="11">
    <citation type="journal article" date="2015" name="Science">
        <title>SARM1 activation triggers axon degeneration locally via NAD+ destruction.</title>
        <authorList>
            <person name="Gerdts J."/>
            <person name="Brace E.J."/>
            <person name="Sasaki Y."/>
            <person name="DiAntonio A."/>
            <person name="Milbrandt J."/>
        </authorList>
    </citation>
    <scope>FUNCTION</scope>
</reference>
<reference key="12">
    <citation type="journal article" date="2016" name="Proc. Natl. Acad. Sci. U.S.A.">
        <title>SARM1-specific motifs in the TIR domain enable NAD+ loss and regulate injury-induced SARM1 activation.</title>
        <authorList>
            <person name="Summers D.W."/>
            <person name="Gibson D.A."/>
            <person name="DiAntonio A."/>
            <person name="Milbrandt J."/>
        </authorList>
    </citation>
    <scope>FUNCTION</scope>
    <scope>ACTIVITY REGULATION</scope>
    <scope>DOMAIN</scope>
    <scope>MUTAGENESIS OF GLU-596; LYS-597; GLY-601; GLU-604; LEU-626; ASP-627; LYS-628; CYS-629 AND ASP-632</scope>
</reference>
<reference key="13">
    <citation type="journal article" date="2017" name="Neuron">
        <title>The SARM1 Toll/Interleukin-1 receptor domain possesses intrinsic NAD+ cleavage activity that promotes pathological axonal degeneration.</title>
        <authorList>
            <person name="Essuman K."/>
            <person name="Summers D.W."/>
            <person name="Sasaki Y."/>
            <person name="Mao X."/>
            <person name="DiAntonio A."/>
            <person name="Milbrandt J."/>
        </authorList>
    </citation>
    <scope>FUNCTION</scope>
    <scope>CATALYTIC ACTIVITY</scope>
    <scope>ACTIVITY REGULATION</scope>
    <scope>ACTIVE SITE</scope>
    <scope>BIOPHYSICOCHEMICAL PROPERTIES</scope>
    <scope>MUTAGENESIS OF GLU-596; GLY-601 AND GLU-642</scope>
</reference>
<reference key="14">
    <citation type="journal article" date="2018" name="Curr. Biol.">
        <title>TIR domain proteins are an ancient family of NAD+-consuming enzymes.</title>
        <authorList>
            <person name="Essuman K."/>
            <person name="Summers D.W."/>
            <person name="Sasaki Y."/>
            <person name="Mao X."/>
            <person name="Yim A.K.Y."/>
            <person name="DiAntonio A."/>
            <person name="Milbrandt J."/>
        </authorList>
    </citation>
    <scope>FUNCTION</scope>
    <scope>CATALYTIC ACTIVITY</scope>
</reference>
<reference key="15">
    <citation type="journal article" date="2018" name="J. Biol. Chem.">
        <title>c-Jun N-terminal kinase (JNK)-mediated phosphorylation of SARM1 regulates NAD+ cleavage activity to inhibit mitochondrial respiration.</title>
        <authorList>
            <person name="Murata H."/>
            <person name="Khine C.C."/>
            <person name="Nishikawa A."/>
            <person name="Yamamoto K.I."/>
            <person name="Kinoshita R."/>
            <person name="Sakaguchi M."/>
        </authorList>
    </citation>
    <scope>FUNCTION</scope>
    <scope>CATALYTIC ACTIVITY</scope>
    <scope>PHOSPHORYLATION AT SER-548</scope>
    <scope>MUTAGENESIS OF SER-408; SER-411; THR-419; SER-427; SER-432; THR-447; THR-453; THR-462; THR-471; THR-475; SER-480; THR-481; SER-485; SER-493; THR-502; SER-507; SER-513; SER-519; THR-540 AND SER-548</scope>
</reference>
<reference key="16">
    <citation type="journal article" date="2019" name="IScience">
        <title>A cell-permeant mimetic of NMN activates SARM1 to produce cyclic ADP-ribose and induce non-apoptotic cell death.</title>
        <authorList>
            <person name="Zhao Z.Y."/>
            <person name="Xie X.J."/>
            <person name="Li W.H."/>
            <person name="Liu J."/>
            <person name="Chen Z."/>
            <person name="Zhang B."/>
            <person name="Li T."/>
            <person name="Li S.L."/>
            <person name="Lu J.G."/>
            <person name="Zhang L."/>
            <person name="Zhang L.H."/>
            <person name="Xu Z."/>
            <person name="Lee H.C."/>
            <person name="Zhao Y.J."/>
        </authorList>
    </citation>
    <scope>FUNCTION</scope>
    <scope>CATALYTIC ACTIVITY</scope>
    <scope>ACTIVITY REGULATION</scope>
    <scope>MUTAGENESIS OF GLU-642</scope>
</reference>
<reference key="17">
    <citation type="journal article" date="2019" name="Science">
        <title>TIR domains of plant immune receptors are NAD+-cleaving enzymes that promote cell death.</title>
        <authorList>
            <person name="Wan L."/>
            <person name="Essuman K."/>
            <person name="Anderson R.G."/>
            <person name="Sasaki Y."/>
            <person name="Monteiro F."/>
            <person name="Chung E.H."/>
            <person name="Osborne Nishimura E."/>
            <person name="DiAntonio A."/>
            <person name="Milbrandt J."/>
            <person name="Dangl J.L."/>
            <person name="Nishimura M.T."/>
        </authorList>
    </citation>
    <scope>FUNCTION</scope>
    <scope>CATALYTIC ACTIVITY</scope>
    <scope>ACTIVE SITE</scope>
    <scope>MUTAGENESIS OF GLU-642</scope>
</reference>
<reference key="18">
    <citation type="journal article" date="2020" name="Biochemistry">
        <title>Initial kinetic characterization of sterile alpha and Toll/interleukin receptor motif-containing protein 1.</title>
        <authorList>
            <person name="Loring H.S."/>
            <person name="Icso J.D."/>
            <person name="Nemmara V.V."/>
            <person name="Thompson P.R."/>
        </authorList>
    </citation>
    <scope>FUNCTION</scope>
    <scope>CATALYTIC ACTIVITY</scope>
</reference>
<reference key="19">
    <citation type="journal article" date="2020" name="Bioorg. Med. Chem.">
        <title>Identification of the first noncompetitive SARM1 inhibitors.</title>
        <authorList>
            <person name="Loring H.S."/>
            <person name="Parelkar S.S."/>
            <person name="Mondal S."/>
            <person name="Thompson P.R."/>
        </authorList>
    </citation>
    <scope>FUNCTION</scope>
    <scope>CATALYTIC ACTIVITY</scope>
    <scope>ACTIVITY REGULATION</scope>
    <scope>MUTAGENESIS OF CYS-629 AND CYS-635</scope>
</reference>
<reference evidence="45" key="20">
    <citation type="journal article" date="2019" name="J. Mol. Biol.">
        <title>Structural evidence for an octameric ring arrangement of SARM1.</title>
        <authorList>
            <person name="Sporny M."/>
            <person name="Guez-Haddad J."/>
            <person name="Lebendiker M."/>
            <person name="Ulisse V."/>
            <person name="Volf A."/>
            <person name="Mim C."/>
            <person name="Isupov M.N."/>
            <person name="Opatowsky Y."/>
        </authorList>
    </citation>
    <scope>X-RAY CRYSTALLOGRAPHY (2.47 ANGSTROMS) OF 387-548</scope>
    <scope>SUBUNIT</scope>
    <scope>ACTIVITY REGULATION</scope>
    <scope>DOMAIN</scope>
    <scope>MUTAGENESIS OF ASP-454; 461-ILE--LYS-464; ILE-461; LYS-464; 531-LEU--VAL-533; LEU-531 AND VAL-533</scope>
</reference>
<reference evidence="38 39 40 41 42 43 44" key="21">
    <citation type="journal article" date="2019" name="Science">
        <title>NAD+ cleavage activity by animal and plant TIR domains in cell death pathways.</title>
        <authorList>
            <person name="Horsefield S."/>
            <person name="Burdett H."/>
            <person name="Zhang X."/>
            <person name="Manik M.K."/>
            <person name="Shi Y."/>
            <person name="Chen J."/>
            <person name="Qi T."/>
            <person name="Gilley J."/>
            <person name="Lai J.S."/>
            <person name="Rank M.X."/>
            <person name="Casey L.W."/>
            <person name="Gu W."/>
            <person name="Ericsson D.J."/>
            <person name="Foley G."/>
            <person name="Hughes R.O."/>
            <person name="Bosanac T."/>
            <person name="von Itzstein M."/>
            <person name="Rathjen J.P."/>
            <person name="Nanson J.D."/>
            <person name="Boden M."/>
            <person name="Dry I.B."/>
            <person name="Williams S.J."/>
            <person name="Staskawicz B.J."/>
            <person name="Coleman M.P."/>
            <person name="Ve T."/>
            <person name="Dodds P.N."/>
            <person name="Kobe B."/>
        </authorList>
    </citation>
    <scope>X-RAY CRYSTALLOGRAPHY (1.67 ANGSTROMS) OF 560-700</scope>
    <scope>FUNCTION</scope>
    <scope>CATALYTIC ACTIVITY</scope>
    <scope>ACTIVE SITE</scope>
    <scope>SUBUNIT</scope>
    <scope>ACTIVITY REGULATION</scope>
    <scope>MUTAGENESIS OF TYR-568; 569-ARG-ARG-570; ARG-569; LEU-579; ASP-594; GLU-596; GLY-601; GLU-642 AND HIS-685</scope>
</reference>
<reference evidence="46" key="22">
    <citation type="journal article" date="2020" name="Cell Rep.">
        <title>Structural and Mechanistic Regulation of the Pro-degenerative NAD Hydrolase SARM1.</title>
        <authorList>
            <person name="Bratkowski M."/>
            <person name="Xie T."/>
            <person name="Thayer D.A."/>
            <person name="Lad S."/>
            <person name="Mathur P."/>
            <person name="Yang Y.S."/>
            <person name="Danko G."/>
            <person name="Burdett T.C."/>
            <person name="Danao J."/>
            <person name="Cantor A."/>
            <person name="Kozak J.A."/>
            <person name="Brown S.P."/>
            <person name="Bai X."/>
            <person name="Sambashivan S."/>
        </authorList>
    </citation>
    <scope>STRUCTURE BY ELECTRON MICROSCOPY (3.30 ANGSTROMS) OF 49-724</scope>
    <scope>ACTIVITY REGULATION</scope>
    <scope>SUBUNIT</scope>
</reference>
<reference key="23">
    <citation type="journal article" date="2020" name="Nature">
        <title>The NAD+-mediated self-inhibition mechanism of pro-neurodegenerative Sarm1.</title>
        <authorList>
            <person name="Jiang Y."/>
            <person name="Liu T."/>
            <person name="Lee C.H."/>
            <person name="Chang Q."/>
            <person name="Yang J."/>
            <person name="Zhang Z."/>
        </authorList>
    </citation>
    <scope>STRUCTURE BY ELECTRON MICROSCOPY (2.60 ANGSTROMS) OF MUTANT ALA-642 IN COMPLEX WITH NAD</scope>
    <scope>FUNCTION</scope>
    <scope>CATALYTIC ACTIVITY</scope>
    <scope>ACTIVITY REGULATION</scope>
    <scope>DOMAIN</scope>
    <scope>SUBUNIT</scope>
    <scope>MUTAGENESIS OF TRP-103; ARG-110; GLN-150; ARG-157; HIS-190; LYS-193; ARG-249; TRP-253; PHE-259; LYS-261 AND GLU-642</scope>
</reference>
<name>SARM1_HUMAN</name>
<sequence length="724" mass="79388">MVLTLLLSAYKLCRFFAMSGPRPGAERLAVPGPDGGGGTGPWWAAGGRGPREVSPGAGTEVQDALERALPELQQALSALKQAGGARAVGAGLAEVFQLVEEAWLLPAVGREVAQGLCDAIRLDGGLDLLLRLLQAPELETRVQAARLLEQILVAENRDRVARIGLGVILNLAKEREPVELARSVAGILEHMFKHSEETCQRLVAAGGLDAVLYWCRRTDPALLRHCALALGNCALHGGQAVQRRMVEKRAAEWLFPLAFSKEDELLRLHACLAVAVLATNKEVEREVERSGTLALVEPLVASLDPGRFARCLVDASDTSQGRGPDDLQRLVPLLDSNRLEAQCIGAFYLCAEAAIKSLQGKTKVFSDIGAIQSLKRLVSYSTNGTKSALAKRALRLLGEEVPRPILPSVPSWKEAEVQTWLQQIGFSKYCESFREQQVDGDLLLRLTEEELQTDLGMKSGITRKRFFRELTELKTFANYSTCDRSNLADWLGSLDPRFRQYTYGLVSCGLDRSLLHRVSEQQLLEDCGIHLGVHRARILTAAREMLHSPLPCTGGKPSGDTPDVFISYRRNSGSQLASLLKVHLQLHGFSVFIDVEKLEAGKFEDKLIQSVMGARNFVLVLSPGALDKCMQDHDCKDWVHKEIVTALSCGKNIVPIIDGFEWPEPQVLPEDMQAVLTFNGIKWSHEYQEATIEKIIRFLQGRSSRDSSAGSDTSLEGAAPMGPT</sequence>
<dbReference type="EC" id="3.2.2.6" evidence="14 16 17 19 20 24"/>
<dbReference type="EC" id="3.2.2.-" evidence="15"/>
<dbReference type="EMBL" id="AJ290445">
    <property type="protein sequence ID" value="CAB90355.1"/>
    <property type="molecule type" value="mRNA"/>
</dbReference>
<dbReference type="EMBL" id="AY444166">
    <property type="protein sequence ID" value="AAR17520.1"/>
    <property type="molecule type" value="mRNA"/>
</dbReference>
<dbReference type="EMBL" id="AB011096">
    <property type="protein sequence ID" value="BAA25450.1"/>
    <property type="molecule type" value="mRNA"/>
</dbReference>
<dbReference type="CCDS" id="CCDS11230.2">
    <molecule id="Q6SZW1-1"/>
</dbReference>
<dbReference type="RefSeq" id="NP_055892.2">
    <molecule id="Q6SZW1-1"/>
    <property type="nucleotide sequence ID" value="NM_015077.4"/>
</dbReference>
<dbReference type="PDB" id="6O0Q">
    <property type="method" value="X-ray"/>
    <property type="resolution" value="1.80 A"/>
    <property type="chains" value="A/B=560-700"/>
</dbReference>
<dbReference type="PDB" id="6O0R">
    <property type="method" value="X-ray"/>
    <property type="resolution" value="1.80 A"/>
    <property type="chains" value="A/B=560-700"/>
</dbReference>
<dbReference type="PDB" id="6O0S">
    <property type="method" value="X-ray"/>
    <property type="resolution" value="2.70 A"/>
    <property type="chains" value="A/B/C/D/E/F/G/H=409-561"/>
</dbReference>
<dbReference type="PDB" id="6O0T">
    <property type="method" value="X-ray"/>
    <property type="resolution" value="2.80 A"/>
    <property type="chains" value="A/B/C/D/E/F/G/H=409-561"/>
</dbReference>
<dbReference type="PDB" id="6O0U">
    <property type="method" value="X-ray"/>
    <property type="resolution" value="3.03 A"/>
    <property type="chains" value="A/B=560-700"/>
</dbReference>
<dbReference type="PDB" id="6O0V">
    <property type="method" value="X-ray"/>
    <property type="resolution" value="2.07 A"/>
    <property type="chains" value="A/B/C/D=560-700"/>
</dbReference>
<dbReference type="PDB" id="6O1B">
    <property type="method" value="X-ray"/>
    <property type="resolution" value="1.67 A"/>
    <property type="chains" value="A=560-700"/>
</dbReference>
<dbReference type="PDB" id="6QWV">
    <property type="method" value="X-ray"/>
    <property type="resolution" value="2.47 A"/>
    <property type="chains" value="A/B/C/D/E/F/G/H/I/J/K/L/M/N/O/P=387-548"/>
</dbReference>
<dbReference type="PDB" id="6WPK">
    <property type="method" value="EM"/>
    <property type="resolution" value="3.30 A"/>
    <property type="chains" value="A/B/C/D/E/F/G/H=49-724"/>
</dbReference>
<dbReference type="PDB" id="6ZFX">
    <property type="method" value="EM"/>
    <property type="resolution" value="2.88 A"/>
    <property type="chains" value="A/B/C/D/E/F/G/H=26-724"/>
</dbReference>
<dbReference type="PDB" id="6ZG0">
    <property type="method" value="EM"/>
    <property type="resolution" value="7.70 A"/>
    <property type="chains" value="A/B/C/D/E/F/G/H=26-724"/>
</dbReference>
<dbReference type="PDB" id="6ZG1">
    <property type="method" value="EM"/>
    <property type="resolution" value="3.77 A"/>
    <property type="chains" value="A/B/C/D/E/F/G/H=387-548"/>
</dbReference>
<dbReference type="PDB" id="7ANW">
    <property type="method" value="EM"/>
    <property type="resolution" value="2.68 A"/>
    <property type="chains" value="A/B/C/D/E/F/G/H=26-724"/>
</dbReference>
<dbReference type="PDB" id="7CM5">
    <property type="method" value="EM"/>
    <property type="resolution" value="2.60 A"/>
    <property type="chains" value="A/B/C/D/E/F/G/H=1-724"/>
</dbReference>
<dbReference type="PDB" id="7CM6">
    <property type="method" value="EM"/>
    <property type="resolution" value="3.00 A"/>
    <property type="chains" value="A/B/C/D/E/F/G/H=1-724"/>
</dbReference>
<dbReference type="PDB" id="7CM7">
    <property type="method" value="EM"/>
    <property type="resolution" value="2.60 A"/>
    <property type="chains" value="A/B/C/D/E/F/G/H=1-724"/>
</dbReference>
<dbReference type="PDB" id="7DJT">
    <property type="method" value="EM"/>
    <property type="resolution" value="2.80 A"/>
    <property type="chains" value="A/B/C/D/E/F/G/H=27-724"/>
</dbReference>
<dbReference type="PDB" id="7KNQ">
    <property type="method" value="EM"/>
    <property type="resolution" value="3.40 A"/>
    <property type="chains" value="A/B/C/D/E/F/G/H=1-724"/>
</dbReference>
<dbReference type="PDB" id="7LD0">
    <property type="method" value="EM"/>
    <property type="resolution" value="3.10 A"/>
    <property type="chains" value="A/B/C/D/E/F/G/H=28-724"/>
</dbReference>
<dbReference type="PDB" id="7NAG">
    <property type="method" value="X-ray"/>
    <property type="resolution" value="1.72 A"/>
    <property type="chains" value="A/B=560-700"/>
</dbReference>
<dbReference type="PDB" id="7NAH">
    <property type="method" value="X-ray"/>
    <property type="resolution" value="1.79 A"/>
    <property type="chains" value="A/B=560-700"/>
</dbReference>
<dbReference type="PDB" id="7NAI">
    <property type="method" value="X-ray"/>
    <property type="resolution" value="1.74 A"/>
    <property type="chains" value="A/B=560-700"/>
</dbReference>
<dbReference type="PDB" id="7NAJ">
    <property type="method" value="X-ray"/>
    <property type="resolution" value="1.60 A"/>
    <property type="chains" value="A/B=560-700"/>
</dbReference>
<dbReference type="PDB" id="7NAK">
    <property type="method" value="EM"/>
    <property type="resolution" value="2.90 A"/>
    <property type="chains" value="A/B/C/D/E/F/G/H=28-724"/>
</dbReference>
<dbReference type="PDB" id="7NAL">
    <property type="method" value="EM"/>
    <property type="resolution" value="3.00 A"/>
    <property type="chains" value="A/B/C/D/E/F/G/H=28-724"/>
</dbReference>
<dbReference type="PDB" id="7QG0">
    <property type="method" value="EM"/>
    <property type="resolution" value="4.02 A"/>
    <property type="chains" value="A/B/C/D/E/F/G/H/I/J/K/L/M/N/O/P=26-724"/>
</dbReference>
<dbReference type="PDB" id="8D0C">
    <property type="method" value="X-ray"/>
    <property type="resolution" value="2.09 A"/>
    <property type="chains" value="A/B=558-700"/>
</dbReference>
<dbReference type="PDB" id="8D0D">
    <property type="method" value="X-ray"/>
    <property type="resolution" value="1.96 A"/>
    <property type="chains" value="A/B=558-700"/>
</dbReference>
<dbReference type="PDB" id="8D0E">
    <property type="method" value="X-ray"/>
    <property type="resolution" value="1.88 A"/>
    <property type="chains" value="A/B=558-700"/>
</dbReference>
<dbReference type="PDB" id="8D0F">
    <property type="method" value="X-ray"/>
    <property type="resolution" value="1.74 A"/>
    <property type="chains" value="A/B=558-700"/>
</dbReference>
<dbReference type="PDB" id="8D0G">
    <property type="method" value="X-ray"/>
    <property type="resolution" value="1.99 A"/>
    <property type="chains" value="A/B=558-700"/>
</dbReference>
<dbReference type="PDB" id="8D0H">
    <property type="method" value="X-ray"/>
    <property type="resolution" value="2.37 A"/>
    <property type="chains" value="A/B=558-700"/>
</dbReference>
<dbReference type="PDB" id="8D0I">
    <property type="method" value="X-ray"/>
    <property type="resolution" value="2.00 A"/>
    <property type="chains" value="A/B=558-700"/>
</dbReference>
<dbReference type="PDB" id="8D0J">
    <property type="method" value="X-ray"/>
    <property type="resolution" value="1.94 A"/>
    <property type="chains" value="A/B=558-700"/>
</dbReference>
<dbReference type="PDB" id="8GNI">
    <property type="method" value="EM"/>
    <property type="resolution" value="3.74 A"/>
    <property type="chains" value="A/B=1-724"/>
</dbReference>
<dbReference type="PDB" id="8GNJ">
    <property type="method" value="EM"/>
    <property type="resolution" value="3.78 A"/>
    <property type="chains" value="A/B=1-724"/>
</dbReference>
<dbReference type="PDB" id="8GQ5">
    <property type="method" value="EM"/>
    <property type="resolution" value="2.70 A"/>
    <property type="chains" value="A/B/C/D/E/F/G/H/I/J/K/L/M/N/O/P=1-724"/>
</dbReference>
<dbReference type="PDB" id="8P2L">
    <property type="method" value="EM"/>
    <property type="resolution" value="2.68 A"/>
    <property type="chains" value="A/B/C/D/E/F/G/H/I/J/K/L/M/N/O/P=26-570"/>
</dbReference>
<dbReference type="PDB" id="9L2D">
    <property type="method" value="EM"/>
    <property type="resolution" value="2.83 A"/>
    <property type="chains" value="A/B/C/D/E/F/G/H=1-724"/>
</dbReference>
<dbReference type="PDB" id="9L2E">
    <property type="method" value="EM"/>
    <property type="resolution" value="2.46 A"/>
    <property type="chains" value="A/B/C/D/E/F/G/H=1-724"/>
</dbReference>
<dbReference type="PDBsum" id="6O0Q"/>
<dbReference type="PDBsum" id="6O0R"/>
<dbReference type="PDBsum" id="6O0S"/>
<dbReference type="PDBsum" id="6O0T"/>
<dbReference type="PDBsum" id="6O0U"/>
<dbReference type="PDBsum" id="6O0V"/>
<dbReference type="PDBsum" id="6O1B"/>
<dbReference type="PDBsum" id="6QWV"/>
<dbReference type="PDBsum" id="6WPK"/>
<dbReference type="PDBsum" id="6ZFX"/>
<dbReference type="PDBsum" id="6ZG0"/>
<dbReference type="PDBsum" id="6ZG1"/>
<dbReference type="PDBsum" id="7ANW"/>
<dbReference type="PDBsum" id="7CM5"/>
<dbReference type="PDBsum" id="7CM6"/>
<dbReference type="PDBsum" id="7CM7"/>
<dbReference type="PDBsum" id="7DJT"/>
<dbReference type="PDBsum" id="7KNQ"/>
<dbReference type="PDBsum" id="7LD0"/>
<dbReference type="PDBsum" id="7NAG"/>
<dbReference type="PDBsum" id="7NAH"/>
<dbReference type="PDBsum" id="7NAI"/>
<dbReference type="PDBsum" id="7NAJ"/>
<dbReference type="PDBsum" id="7NAK"/>
<dbReference type="PDBsum" id="7NAL"/>
<dbReference type="PDBsum" id="7QG0"/>
<dbReference type="PDBsum" id="8D0C"/>
<dbReference type="PDBsum" id="8D0D"/>
<dbReference type="PDBsum" id="8D0E"/>
<dbReference type="PDBsum" id="8D0F"/>
<dbReference type="PDBsum" id="8D0G"/>
<dbReference type="PDBsum" id="8D0H"/>
<dbReference type="PDBsum" id="8D0I"/>
<dbReference type="PDBsum" id="8D0J"/>
<dbReference type="PDBsum" id="8GNI"/>
<dbReference type="PDBsum" id="8GNJ"/>
<dbReference type="PDBsum" id="8GQ5"/>
<dbReference type="PDBsum" id="8P2L"/>
<dbReference type="PDBsum" id="9L2D"/>
<dbReference type="PDBsum" id="9L2E"/>
<dbReference type="EMDB" id="EMD-11187"/>
<dbReference type="EMDB" id="EMD-11190"/>
<dbReference type="EMDB" id="EMD-11191"/>
<dbReference type="EMDB" id="EMD-11834"/>
<dbReference type="EMDB" id="EMD-13951"/>
<dbReference type="EMDB" id="EMD-21863"/>
<dbReference type="EMDB" id="EMD-22954"/>
<dbReference type="EMDB" id="EMD-23278"/>
<dbReference type="EMDB" id="EMD-24272"/>
<dbReference type="EMDB" id="EMD-24273"/>
<dbReference type="EMDB" id="EMD-24274"/>
<dbReference type="EMDB" id="EMD-30401"/>
<dbReference type="EMDB" id="EMD-30402"/>
<dbReference type="EMDB" id="EMD-30403"/>
<dbReference type="EMDB" id="EMD-30700"/>
<dbReference type="EMDB" id="EMD-34165"/>
<dbReference type="EMDB" id="EMD-34166"/>
<dbReference type="EMDB" id="EMD-34198"/>
<dbReference type="EMDB" id="EMD-62772"/>
<dbReference type="EMDB" id="EMD-62773"/>
<dbReference type="SMR" id="Q6SZW1"/>
<dbReference type="BioGRID" id="116726">
    <property type="interactions" value="50"/>
</dbReference>
<dbReference type="CORUM" id="Q6SZW1"/>
<dbReference type="FunCoup" id="Q6SZW1">
    <property type="interactions" value="554"/>
</dbReference>
<dbReference type="IntAct" id="Q6SZW1">
    <property type="interactions" value="27"/>
</dbReference>
<dbReference type="MINT" id="Q6SZW1"/>
<dbReference type="STRING" id="9606.ENSP00000468032"/>
<dbReference type="BindingDB" id="Q6SZW1"/>
<dbReference type="ChEMBL" id="CHEMBL4523350"/>
<dbReference type="DrugCentral" id="Q6SZW1"/>
<dbReference type="GlyGen" id="Q6SZW1">
    <property type="glycosylation" value="3 sites, 1 N-linked glycan (1 site), 1 O-linked glycan (1 site)"/>
</dbReference>
<dbReference type="iPTMnet" id="Q6SZW1"/>
<dbReference type="PhosphoSitePlus" id="Q6SZW1"/>
<dbReference type="BioMuta" id="SARM1"/>
<dbReference type="DMDM" id="83288284"/>
<dbReference type="jPOST" id="Q6SZW1"/>
<dbReference type="MassIVE" id="Q6SZW1"/>
<dbReference type="PaxDb" id="9606-ENSP00000468032"/>
<dbReference type="PeptideAtlas" id="Q6SZW1"/>
<dbReference type="ProteomicsDB" id="67362">
    <molecule id="Q6SZW1-1"/>
</dbReference>
<dbReference type="ProteomicsDB" id="67363">
    <molecule id="Q6SZW1-2"/>
</dbReference>
<dbReference type="Pumba" id="Q6SZW1"/>
<dbReference type="Antibodypedia" id="14061">
    <property type="antibodies" value="201 antibodies from 34 providers"/>
</dbReference>
<dbReference type="DNASU" id="23098"/>
<dbReference type="Ensembl" id="ENST00000585482.6">
    <molecule id="Q6SZW1-1"/>
    <property type="protein sequence ID" value="ENSP00000468032.2"/>
    <property type="gene ID" value="ENSG00000004139.14"/>
</dbReference>
<dbReference type="GeneID" id="23098"/>
<dbReference type="KEGG" id="hsa:23098"/>
<dbReference type="MANE-Select" id="ENST00000585482.6">
    <property type="protein sequence ID" value="ENSP00000468032.2"/>
    <property type="RefSeq nucleotide sequence ID" value="NM_015077.4"/>
    <property type="RefSeq protein sequence ID" value="NP_055892.2"/>
</dbReference>
<dbReference type="UCSC" id="uc032ezg.2">
    <molecule id="Q6SZW1-1"/>
    <property type="organism name" value="human"/>
</dbReference>
<dbReference type="AGR" id="HGNC:17074"/>
<dbReference type="CTD" id="23098"/>
<dbReference type="DisGeNET" id="23098"/>
<dbReference type="GeneCards" id="SARM1"/>
<dbReference type="HGNC" id="HGNC:17074">
    <property type="gene designation" value="SARM1"/>
</dbReference>
<dbReference type="HPA" id="ENSG00000004139">
    <property type="expression patterns" value="Low tissue specificity"/>
</dbReference>
<dbReference type="MalaCards" id="SARM1"/>
<dbReference type="MIM" id="607732">
    <property type="type" value="gene"/>
</dbReference>
<dbReference type="neXtProt" id="NX_Q6SZW1"/>
<dbReference type="OpenTargets" id="ENSG00000004139"/>
<dbReference type="PharmGKB" id="PA134971180"/>
<dbReference type="VEuPathDB" id="HostDB:ENSG00000004139"/>
<dbReference type="eggNOG" id="KOG3678">
    <property type="taxonomic scope" value="Eukaryota"/>
</dbReference>
<dbReference type="GeneTree" id="ENSGT00390000004155"/>
<dbReference type="HOGENOM" id="CLU_003286_2_0_1"/>
<dbReference type="InParanoid" id="Q6SZW1"/>
<dbReference type="OMA" id="CERFWEH"/>
<dbReference type="OrthoDB" id="202764at2759"/>
<dbReference type="PAN-GO" id="Q6SZW1">
    <property type="GO annotations" value="2 GO annotations based on evolutionary models"/>
</dbReference>
<dbReference type="PhylomeDB" id="Q6SZW1"/>
<dbReference type="PathwayCommons" id="Q6SZW1"/>
<dbReference type="Reactome" id="R-HSA-166166">
    <molecule id="Q6SZW1-1"/>
    <property type="pathway name" value="MyD88-independent TLR4 cascade"/>
</dbReference>
<dbReference type="Reactome" id="R-HSA-168164">
    <molecule id="Q6SZW1-1"/>
    <property type="pathway name" value="Toll Like Receptor 3 (TLR3) Cascade"/>
</dbReference>
<dbReference type="Reactome" id="R-HSA-936964">
    <molecule id="Q6SZW1-1"/>
    <property type="pathway name" value="Activation of IRF3, IRF7 mediated by TBK1, IKKEpsilon (IKBKE)"/>
</dbReference>
<dbReference type="Reactome" id="R-HSA-937041">
    <molecule id="Q6SZW1-1"/>
    <property type="pathway name" value="IKK complex recruitment mediated by RIP1"/>
</dbReference>
<dbReference type="Reactome" id="R-HSA-937072">
    <molecule id="Q6SZW1-1"/>
    <property type="pathway name" value="TRAF6-mediated induction of TAK1 complex within TLR4 complex"/>
</dbReference>
<dbReference type="SignaLink" id="Q6SZW1"/>
<dbReference type="SIGNOR" id="Q6SZW1"/>
<dbReference type="BioGRID-ORCS" id="23098">
    <property type="hits" value="6 hits in 295 CRISPR screens"/>
</dbReference>
<dbReference type="ChiTaRS" id="SARM1">
    <property type="organism name" value="human"/>
</dbReference>
<dbReference type="GenomeRNAi" id="23098"/>
<dbReference type="Pharos" id="Q6SZW1">
    <property type="development level" value="Tchem"/>
</dbReference>
<dbReference type="PRO" id="PR:Q6SZW1"/>
<dbReference type="Proteomes" id="UP000005640">
    <property type="component" value="Chromosome 17"/>
</dbReference>
<dbReference type="RNAct" id="Q6SZW1">
    <property type="molecule type" value="protein"/>
</dbReference>
<dbReference type="Bgee" id="ENSG00000004139">
    <property type="expression patterns" value="Expressed in body of pancreas and 141 other cell types or tissues"/>
</dbReference>
<dbReference type="ExpressionAtlas" id="Q6SZW1">
    <property type="expression patterns" value="baseline and differential"/>
</dbReference>
<dbReference type="GO" id="GO:0030424">
    <property type="term" value="C:axon"/>
    <property type="evidence" value="ECO:0007669"/>
    <property type="project" value="UniProtKB-SubCell"/>
</dbReference>
<dbReference type="GO" id="GO:0009986">
    <property type="term" value="C:cell surface"/>
    <property type="evidence" value="ECO:0007669"/>
    <property type="project" value="Ensembl"/>
</dbReference>
<dbReference type="GO" id="GO:0005737">
    <property type="term" value="C:cytoplasm"/>
    <property type="evidence" value="ECO:0000250"/>
    <property type="project" value="UniProtKB"/>
</dbReference>
<dbReference type="GO" id="GO:0005829">
    <property type="term" value="C:cytosol"/>
    <property type="evidence" value="ECO:0000304"/>
    <property type="project" value="Reactome"/>
</dbReference>
<dbReference type="GO" id="GO:0030425">
    <property type="term" value="C:dendrite"/>
    <property type="evidence" value="ECO:0000250"/>
    <property type="project" value="UniProtKB"/>
</dbReference>
<dbReference type="GO" id="GO:0099243">
    <property type="term" value="C:extrinsic component of synaptic membrane"/>
    <property type="evidence" value="ECO:0007669"/>
    <property type="project" value="Ensembl"/>
</dbReference>
<dbReference type="GO" id="GO:0098978">
    <property type="term" value="C:glutamatergic synapse"/>
    <property type="evidence" value="ECO:0007669"/>
    <property type="project" value="Ensembl"/>
</dbReference>
<dbReference type="GO" id="GO:0005874">
    <property type="term" value="C:microtubule"/>
    <property type="evidence" value="ECO:0000250"/>
    <property type="project" value="UniProtKB"/>
</dbReference>
<dbReference type="GO" id="GO:0005741">
    <property type="term" value="C:mitochondrial outer membrane"/>
    <property type="evidence" value="ECO:0007669"/>
    <property type="project" value="Ensembl"/>
</dbReference>
<dbReference type="GO" id="GO:0005739">
    <property type="term" value="C:mitochondrion"/>
    <property type="evidence" value="ECO:0000314"/>
    <property type="project" value="HPA"/>
</dbReference>
<dbReference type="GO" id="GO:0031594">
    <property type="term" value="C:neuromuscular junction"/>
    <property type="evidence" value="ECO:0007669"/>
    <property type="project" value="Ensembl"/>
</dbReference>
<dbReference type="GO" id="GO:0032991">
    <property type="term" value="C:protein-containing complex"/>
    <property type="evidence" value="ECO:0007669"/>
    <property type="project" value="Ensembl"/>
</dbReference>
<dbReference type="GO" id="GO:0045202">
    <property type="term" value="C:synapse"/>
    <property type="evidence" value="ECO:0000250"/>
    <property type="project" value="UniProtKB"/>
</dbReference>
<dbReference type="GO" id="GO:0042802">
    <property type="term" value="F:identical protein binding"/>
    <property type="evidence" value="ECO:0000353"/>
    <property type="project" value="IntAct"/>
</dbReference>
<dbReference type="GO" id="GO:0003953">
    <property type="term" value="F:NAD+ nucleosidase activity"/>
    <property type="evidence" value="ECO:0000314"/>
    <property type="project" value="UniProtKB"/>
</dbReference>
<dbReference type="GO" id="GO:0061809">
    <property type="term" value="F:NAD+ nucleosidase activity, cyclic ADP-ribose generating"/>
    <property type="evidence" value="ECO:0000314"/>
    <property type="project" value="UniProtKB"/>
</dbReference>
<dbReference type="GO" id="GO:0050135">
    <property type="term" value="F:NADP+ nucleosidase activity"/>
    <property type="evidence" value="ECO:0007669"/>
    <property type="project" value="RHEA"/>
</dbReference>
<dbReference type="GO" id="GO:0035591">
    <property type="term" value="F:signaling adaptor activity"/>
    <property type="evidence" value="ECO:0007669"/>
    <property type="project" value="InterPro"/>
</dbReference>
<dbReference type="GO" id="GO:0030154">
    <property type="term" value="P:cell differentiation"/>
    <property type="evidence" value="ECO:0007669"/>
    <property type="project" value="UniProtKB-KW"/>
</dbReference>
<dbReference type="GO" id="GO:0045087">
    <property type="term" value="P:innate immune response"/>
    <property type="evidence" value="ECO:0007669"/>
    <property type="project" value="UniProtKB-KW"/>
</dbReference>
<dbReference type="GO" id="GO:0099010">
    <property type="term" value="P:modification of postsynaptic structure"/>
    <property type="evidence" value="ECO:0007669"/>
    <property type="project" value="Ensembl"/>
</dbReference>
<dbReference type="GO" id="GO:0019677">
    <property type="term" value="P:NAD catabolic process"/>
    <property type="evidence" value="ECO:0000314"/>
    <property type="project" value="UniProtKB"/>
</dbReference>
<dbReference type="GO" id="GO:0034128">
    <property type="term" value="P:negative regulation of MyD88-independent toll-like receptor signaling pathway"/>
    <property type="evidence" value="ECO:0007669"/>
    <property type="project" value="InterPro"/>
</dbReference>
<dbReference type="GO" id="GO:0007399">
    <property type="term" value="P:nervous system development"/>
    <property type="evidence" value="ECO:0007669"/>
    <property type="project" value="UniProtKB-KW"/>
</dbReference>
<dbReference type="GO" id="GO:0050877">
    <property type="term" value="P:nervous system process"/>
    <property type="evidence" value="ECO:0007669"/>
    <property type="project" value="Ensembl"/>
</dbReference>
<dbReference type="GO" id="GO:0070585">
    <property type="term" value="P:protein localization to mitochondrion"/>
    <property type="evidence" value="ECO:0000250"/>
    <property type="project" value="UniProtKB"/>
</dbReference>
<dbReference type="GO" id="GO:0048814">
    <property type="term" value="P:regulation of dendrite morphogenesis"/>
    <property type="evidence" value="ECO:0000250"/>
    <property type="project" value="UniProtKB"/>
</dbReference>
<dbReference type="GO" id="GO:0043523">
    <property type="term" value="P:regulation of neuron apoptotic process"/>
    <property type="evidence" value="ECO:0007669"/>
    <property type="project" value="Ensembl"/>
</dbReference>
<dbReference type="GO" id="GO:1905806">
    <property type="term" value="P:regulation of synapse pruning"/>
    <property type="evidence" value="ECO:0007669"/>
    <property type="project" value="Ensembl"/>
</dbReference>
<dbReference type="GO" id="GO:0048678">
    <property type="term" value="P:response to axon injury"/>
    <property type="evidence" value="ECO:0000314"/>
    <property type="project" value="UniProtKB"/>
</dbReference>
<dbReference type="GO" id="GO:0009749">
    <property type="term" value="P:response to glucose"/>
    <property type="evidence" value="ECO:0007669"/>
    <property type="project" value="Ensembl"/>
</dbReference>
<dbReference type="GO" id="GO:0007165">
    <property type="term" value="P:signal transduction"/>
    <property type="evidence" value="ECO:0007669"/>
    <property type="project" value="InterPro"/>
</dbReference>
<dbReference type="CDD" id="cd09501">
    <property type="entry name" value="SAM_SARM1-like_repeat1"/>
    <property type="match status" value="1"/>
</dbReference>
<dbReference type="CDD" id="cd09502">
    <property type="entry name" value="SAM_SARM1-like_repeat2"/>
    <property type="match status" value="1"/>
</dbReference>
<dbReference type="CDD" id="cd24153">
    <property type="entry name" value="SARM1_N"/>
    <property type="match status" value="1"/>
</dbReference>
<dbReference type="FunFam" id="1.10.150.50:FF:000062">
    <property type="entry name" value="Sterile alpha and TIR motif containing 1"/>
    <property type="match status" value="1"/>
</dbReference>
<dbReference type="FunFam" id="3.40.50.10140:FF:000013">
    <property type="entry name" value="Sterile alpha and TIR motif containing 1"/>
    <property type="match status" value="1"/>
</dbReference>
<dbReference type="FunFam" id="1.10.150.50:FF:000043">
    <property type="entry name" value="Sterile alpha and TIR motif-containing 1"/>
    <property type="match status" value="1"/>
</dbReference>
<dbReference type="FunFam" id="1.25.10.10:FF:000397">
    <property type="entry name" value="sterile alpha and TIR motif-containing protein 1"/>
    <property type="match status" value="1"/>
</dbReference>
<dbReference type="Gene3D" id="1.25.10.10">
    <property type="entry name" value="Leucine-rich Repeat Variant"/>
    <property type="match status" value="1"/>
</dbReference>
<dbReference type="Gene3D" id="3.40.50.10140">
    <property type="entry name" value="Toll/interleukin-1 receptor homology (TIR) domain"/>
    <property type="match status" value="1"/>
</dbReference>
<dbReference type="Gene3D" id="1.10.150.50">
    <property type="entry name" value="Transcription Factor, Ets-1"/>
    <property type="match status" value="2"/>
</dbReference>
<dbReference type="InterPro" id="IPR011989">
    <property type="entry name" value="ARM-like"/>
</dbReference>
<dbReference type="InterPro" id="IPR016024">
    <property type="entry name" value="ARM-type_fold"/>
</dbReference>
<dbReference type="InterPro" id="IPR001660">
    <property type="entry name" value="SAM"/>
</dbReference>
<dbReference type="InterPro" id="IPR013761">
    <property type="entry name" value="SAM/pointed_sf"/>
</dbReference>
<dbReference type="InterPro" id="IPR039184">
    <property type="entry name" value="SARM1"/>
</dbReference>
<dbReference type="InterPro" id="IPR000157">
    <property type="entry name" value="TIR_dom"/>
</dbReference>
<dbReference type="InterPro" id="IPR035897">
    <property type="entry name" value="Toll_tir_struct_dom_sf"/>
</dbReference>
<dbReference type="PANTHER" id="PTHR22998:SF1">
    <property type="entry name" value="NAD(+) HYDROLASE SARM1"/>
    <property type="match status" value="1"/>
</dbReference>
<dbReference type="PANTHER" id="PTHR22998">
    <property type="entry name" value="SARM1"/>
    <property type="match status" value="1"/>
</dbReference>
<dbReference type="Pfam" id="PF07647">
    <property type="entry name" value="SAM_2"/>
    <property type="match status" value="2"/>
</dbReference>
<dbReference type="Pfam" id="PF13676">
    <property type="entry name" value="TIR_2"/>
    <property type="match status" value="1"/>
</dbReference>
<dbReference type="SMART" id="SM00454">
    <property type="entry name" value="SAM"/>
    <property type="match status" value="2"/>
</dbReference>
<dbReference type="SMART" id="SM00255">
    <property type="entry name" value="TIR"/>
    <property type="match status" value="1"/>
</dbReference>
<dbReference type="SUPFAM" id="SSF48371">
    <property type="entry name" value="ARM repeat"/>
    <property type="match status" value="1"/>
</dbReference>
<dbReference type="SUPFAM" id="SSF47769">
    <property type="entry name" value="SAM/Pointed domain"/>
    <property type="match status" value="2"/>
</dbReference>
<dbReference type="SUPFAM" id="SSF52200">
    <property type="entry name" value="Toll/Interleukin receptor TIR domain"/>
    <property type="match status" value="1"/>
</dbReference>
<dbReference type="PROSITE" id="PS50105">
    <property type="entry name" value="SAM_DOMAIN"/>
    <property type="match status" value="2"/>
</dbReference>
<dbReference type="PROSITE" id="PS50104">
    <property type="entry name" value="TIR"/>
    <property type="match status" value="1"/>
</dbReference>
<feature type="transit peptide" description="Mitochondrion" evidence="11">
    <location>
        <begin position="1"/>
        <end position="27"/>
    </location>
</feature>
<feature type="chain" id="PRO_0000097589" description="NAD(+) hydrolase SARM1">
    <location>
        <begin position="28"/>
        <end position="724"/>
    </location>
</feature>
<feature type="repeat" description="ARM 1" evidence="2">
    <location>
        <begin position="60"/>
        <end position="100"/>
    </location>
</feature>
<feature type="repeat" description="ARM 2" evidence="2">
    <location>
        <begin position="114"/>
        <end position="153"/>
    </location>
</feature>
<feature type="repeat" description="ARM 3" evidence="2">
    <location>
        <begin position="155"/>
        <end position="193"/>
    </location>
</feature>
<feature type="repeat" description="ARM 4" evidence="2">
    <location>
        <begin position="196"/>
        <end position="235"/>
    </location>
</feature>
<feature type="repeat" description="ARM 5" evidence="2">
    <location>
        <begin position="237"/>
        <end position="280"/>
    </location>
</feature>
<feature type="repeat" description="ARM 6" evidence="2">
    <location>
        <begin position="281"/>
        <end position="314"/>
    </location>
</feature>
<feature type="repeat" description="ARM 7" evidence="2">
    <location>
        <begin position="315"/>
        <end position="354"/>
    </location>
</feature>
<feature type="repeat" description="ARM 8" evidence="2">
    <location>
        <begin position="359"/>
        <end position="402"/>
    </location>
</feature>
<feature type="domain" description="SAM 1" evidence="3">
    <location>
        <begin position="412"/>
        <end position="476"/>
    </location>
</feature>
<feature type="domain" description="SAM 2" evidence="3">
    <location>
        <begin position="486"/>
        <end position="548"/>
    </location>
</feature>
<feature type="domain" description="TIR" evidence="4">
    <location>
        <begin position="560"/>
        <end position="703"/>
    </location>
</feature>
<feature type="region of interest" description="Disordered" evidence="5">
    <location>
        <begin position="704"/>
        <end position="724"/>
    </location>
</feature>
<feature type="active site" evidence="4 34 35 36">
    <location>
        <position position="642"/>
    </location>
</feature>
<feature type="binding site" evidence="24 47 48">
    <location>
        <position position="103"/>
    </location>
    <ligand>
        <name>NAD(+)</name>
        <dbReference type="ChEBI" id="CHEBI:57540"/>
        <label>1</label>
        <note>inhibitor</note>
    </ligand>
</feature>
<feature type="binding site" evidence="24 47 48">
    <location>
        <position position="110"/>
    </location>
    <ligand>
        <name>NAD(+)</name>
        <dbReference type="ChEBI" id="CHEBI:57540"/>
        <label>1</label>
        <note>inhibitor</note>
    </ligand>
</feature>
<feature type="binding site" evidence="24 47 48">
    <location>
        <begin position="149"/>
        <end position="157"/>
    </location>
    <ligand>
        <name>NAD(+)</name>
        <dbReference type="ChEBI" id="CHEBI:57540"/>
        <label>1</label>
        <note>inhibitor</note>
    </ligand>
</feature>
<feature type="binding site" evidence="24 47 48">
    <location>
        <begin position="190"/>
        <end position="193"/>
    </location>
    <ligand>
        <name>NAD(+)</name>
        <dbReference type="ChEBI" id="CHEBI:57540"/>
        <label>1</label>
        <note>inhibitor</note>
    </ligand>
</feature>
<feature type="binding site" evidence="35">
    <location>
        <begin position="569"/>
        <end position="570"/>
    </location>
    <ligand>
        <name>NAD(+)</name>
        <dbReference type="ChEBI" id="CHEBI:57540"/>
        <label>2</label>
        <note>substrate</note>
    </ligand>
</feature>
<feature type="binding site" evidence="35">
    <location>
        <position position="599"/>
    </location>
    <ligand>
        <name>NAD(+)</name>
        <dbReference type="ChEBI" id="CHEBI:57540"/>
        <label>2</label>
        <note>substrate</note>
    </ligand>
</feature>
<feature type="modified residue" description="Phosphoserine" evidence="16">
    <location>
        <position position="548"/>
    </location>
</feature>
<feature type="modified residue" description="Phosphoserine" evidence="1">
    <location>
        <position position="558"/>
    </location>
</feature>
<feature type="splice variant" id="VSP_013603" description="In isoform 2." evidence="25">
    <original>MVLTLLLSAYKLCRFFAMSGPRPGAERLAVPGPDGGGGTGPWWAAGGRGPREVSPGAGTEVQDALERALPELQQALSALKQAGGARAVGAGLAEVFQLVEEAWLLP</original>
    <variation>MGAVARAHGGLRVARARESVAGGRHRGAGRPGARAAGAAAGLVRAEAGGRRAGRGRRPGRGLPTGGGGLAAA</variation>
    <location>
        <begin position="1"/>
        <end position="106"/>
    </location>
</feature>
<feature type="sequence variant" id="VAR_061702" description="In dbSNP:rs7212814.">
    <original>P</original>
    <variation>R</variation>
    <location>
        <position position="23"/>
    </location>
</feature>
<feature type="mutagenesis site" description="No effect on mitochondrial localization." evidence="11">
    <original>K</original>
    <variation>A</variation>
    <location>
        <position position="11"/>
    </location>
</feature>
<feature type="mutagenesis site" description="Loss in ability to localize to mitochondria and reduction in apoptotic activity." evidence="11">
    <original>R</original>
    <variation>A</variation>
    <location>
        <position position="14"/>
    </location>
</feature>
<feature type="mutagenesis site" description="No effect on mitochondrial localization." evidence="11">
    <original>R</original>
    <variation>A</variation>
    <location>
        <position position="22"/>
    </location>
</feature>
<feature type="mutagenesis site" description="No effect on mitochondrial localization." evidence="11">
    <original>R</original>
    <variation>A</variation>
    <location>
        <position position="27"/>
    </location>
</feature>
<feature type="mutagenesis site" description="In WQH to A mutant: Increased NAD(+)-binding to ARM repeats, leading to decreased NAD(+) hydrolase activity; when associated with A-150 and A-190." evidence="24">
    <original>W</original>
    <variation>A</variation>
    <location>
        <position position="103"/>
    </location>
</feature>
<feature type="mutagenesis site" description="In RRK to A mutant: Slightly reduced NAD(+)-binding to ARM repeats; when associated with A-157 and A-193." evidence="24">
    <original>R</original>
    <variation>A</variation>
    <location>
        <position position="110"/>
    </location>
</feature>
<feature type="mutagenesis site" description="In RRK to E mutant: Strongly reduced NAD(+)-binding to ARM repeats, leading to enhanced NAD(+) hydrolase activity and constitutive axonal degeneration in absence of injury; when associated with E-157 and A-193." evidence="24">
    <original>R</original>
    <variation>E</variation>
    <location>
        <position position="110"/>
    </location>
</feature>
<feature type="mutagenesis site" description="In WQH to A mutant: Increased NAD(+)-binding to ARM repeats, leading to decreased NAD(+) hydrolase activity; when associated with A-103 and A-190." evidence="24">
    <original>Q</original>
    <variation>A</variation>
    <location>
        <position position="150"/>
    </location>
</feature>
<feature type="mutagenesis site" description="In RRK to A mutant: Slightly reduced NAD(+)-binding to ARM repeats; when associated with A-110 and A-193." evidence="24">
    <original>R</original>
    <variation>A</variation>
    <location>
        <position position="157"/>
    </location>
</feature>
<feature type="mutagenesis site" description="In RRK to E mutant: Strongly reduced NAD(+)-binding to ARM repeats, leading to enhanced NAD(+) hydrolase activity and constitutive axonal degeneration in absence of injury; when associated with E-110 and A-193." evidence="24">
    <original>R</original>
    <variation>E</variation>
    <location>
        <position position="157"/>
    </location>
</feature>
<feature type="mutagenesis site" description="In WQH to A mutant: Increased NAD(+)-binding to ARM repeats, leading to decreased NAD(+) hydrolase activity; when associated with A-103 and A-150." evidence="24">
    <original>H</original>
    <variation>A</variation>
    <location>
        <position position="190"/>
    </location>
</feature>
<feature type="mutagenesis site" description="In RRK to A mutant: Slightly reduced NAD(+)-binding to ARM repeats; when associated with A-110 and A-157." evidence="24">
    <original>K</original>
    <variation>A</variation>
    <location>
        <position position="193"/>
    </location>
</feature>
<feature type="mutagenesis site" description="In RRK to E mutant: Strongly reduced NAD(+)-binding to ARM repeats, leading to enhanced NAD(+) hydrolase activity and constitutive axonal degeneration in absence of injury; when associated with E-110 and E-157." evidence="24">
    <original>K</original>
    <variation>E</variation>
    <location>
        <position position="193"/>
    </location>
</feature>
<feature type="mutagenesis site" description="No effect on octamer formation; does not affect NAD(+) hydrolase activity." evidence="24">
    <original>R</original>
    <variation>A</variation>
    <location>
        <position position="249"/>
    </location>
</feature>
<feature type="mutagenesis site" description="Constitutively active mutant; strong ability to trigger axonal degeneration caused by disrupted interaction between the TIR domain and ARM repeats." evidence="24">
    <original>W</original>
    <variation>A</variation>
    <location>
        <position position="253"/>
    </location>
</feature>
<feature type="mutagenesis site" description="No effect on octamer formation. Shows increased NAD(+) hydrolase activity and ability to trigger axonal degeneration." evidence="24">
    <original>F</original>
    <variation>A</variation>
    <location>
        <position position="259"/>
    </location>
</feature>
<feature type="mutagenesis site" description="No effect on octamer formation; does not affect NAD(+) hydrolase activity." evidence="24">
    <original>K</original>
    <variation>A</variation>
    <location>
        <position position="261"/>
    </location>
</feature>
<feature type="mutagenesis site" description="Does not affect phosphorylation level." evidence="16">
    <original>S</original>
    <variation>A</variation>
    <location>
        <position position="408"/>
    </location>
</feature>
<feature type="mutagenesis site" description="Does not affect phosphorylation level." evidence="16">
    <original>S</original>
    <variation>A</variation>
    <location>
        <position position="411"/>
    </location>
</feature>
<feature type="mutagenesis site" description="Does not affect phosphorylation level." evidence="16">
    <original>T</original>
    <variation>A</variation>
    <location>
        <position position="419"/>
    </location>
</feature>
<feature type="mutagenesis site" description="Does not affect phosphorylation level." evidence="16">
    <original>S</original>
    <variation>A</variation>
    <location>
        <position position="427"/>
    </location>
</feature>
<feature type="mutagenesis site" description="Does not affect phosphorylation level." evidence="16">
    <original>S</original>
    <variation>A</variation>
    <location>
        <position position="432"/>
    </location>
</feature>
<feature type="mutagenesis site" description="Does not affect phosphorylation level." evidence="16">
    <original>T</original>
    <variation>A</variation>
    <location>
        <position position="447"/>
    </location>
</feature>
<feature type="mutagenesis site" description="Does not affect phosphorylation level." evidence="16">
    <original>T</original>
    <variation>A</variation>
    <location>
        <position position="453"/>
    </location>
</feature>
<feature type="mutagenesis site" description="Reduced ability to form an octameric ring and promote axonal degeneration following injury." evidence="18">
    <original>D</original>
    <variation>K</variation>
    <location>
        <position position="454"/>
    </location>
</feature>
<feature type="mutagenesis site" description="Strongly reduced ability to form an octameric ring and promote axonal degeneration following injury." evidence="18">
    <original>ITRK</original>
    <variation>DTRD</variation>
    <location>
        <begin position="461"/>
        <end position="464"/>
    </location>
</feature>
<feature type="mutagenesis site" description="Reduced ability to form an octameric ring and promote axonal degeneration following injury." evidence="18">
    <original>I</original>
    <variation>D</variation>
    <location>
        <position position="461"/>
    </location>
</feature>
<feature type="mutagenesis site" description="Does not affect phosphorylation level." evidence="16">
    <original>T</original>
    <variation>A</variation>
    <location>
        <position position="462"/>
    </location>
</feature>
<feature type="mutagenesis site" description="Reduced ability to form an octameric ring and promote axonal degeneration following injury." evidence="18">
    <original>K</original>
    <variation>D</variation>
    <location>
        <position position="464"/>
    </location>
</feature>
<feature type="mutagenesis site" description="Does not affect phosphorylation level." evidence="16">
    <original>T</original>
    <variation>A</variation>
    <location>
        <position position="471"/>
    </location>
</feature>
<feature type="mutagenesis site" description="Does not affect phosphorylation level." evidence="16">
    <original>T</original>
    <variation>A</variation>
    <location>
        <position position="475"/>
    </location>
</feature>
<feature type="mutagenesis site" description="Does not affect phosphorylation level." evidence="16">
    <original>S</original>
    <variation>A</variation>
    <location>
        <position position="480"/>
    </location>
</feature>
<feature type="mutagenesis site" description="Does not affect phosphorylation level." evidence="16">
    <original>T</original>
    <variation>A</variation>
    <location>
        <position position="481"/>
    </location>
</feature>
<feature type="mutagenesis site" description="Does not affect phosphorylation level." evidence="16">
    <original>S</original>
    <variation>A</variation>
    <location>
        <position position="485"/>
    </location>
</feature>
<feature type="mutagenesis site" description="Does not affect phosphorylation level." evidence="16">
    <original>S</original>
    <variation>A</variation>
    <location>
        <position position="493"/>
    </location>
</feature>
<feature type="mutagenesis site" description="Does not affect phosphorylation level." evidence="16">
    <original>T</original>
    <variation>A</variation>
    <location>
        <position position="502"/>
    </location>
</feature>
<feature type="mutagenesis site" description="Does not affect phosphorylation level." evidence="16">
    <original>S</original>
    <variation>A</variation>
    <location>
        <position position="507"/>
    </location>
</feature>
<feature type="mutagenesis site" description="Does not affect phosphorylation level." evidence="16">
    <original>S</original>
    <variation>A</variation>
    <location>
        <position position="513"/>
    </location>
</feature>
<feature type="mutagenesis site" description="Does not affect phosphorylation level." evidence="16">
    <original>S</original>
    <variation>A</variation>
    <location>
        <position position="519"/>
    </location>
</feature>
<feature type="mutagenesis site" description="Slightly reduced ability to form an octameric ring and promote axonal degeneration following injury." evidence="18">
    <original>LGV</original>
    <variation>DGD</variation>
    <location>
        <begin position="531"/>
        <end position="533"/>
    </location>
</feature>
<feature type="mutagenesis site" description="Slightly reduced ability to form an octameric ring and promote axonal degeneration following injury." evidence="18">
    <original>L</original>
    <variation>D</variation>
    <location>
        <position position="531"/>
    </location>
</feature>
<feature type="mutagenesis site" description="Slightly reduced ability to form an octameric ring and promote axonal degeneration following injury." evidence="18">
    <original>V</original>
    <variation>D</variation>
    <location>
        <position position="533"/>
    </location>
</feature>
<feature type="mutagenesis site" description="Does not affect phosphorylation level." evidence="16">
    <original>T</original>
    <variation>A</variation>
    <location>
        <position position="540"/>
    </location>
</feature>
<feature type="mutagenesis site" description="Decreased phosphorylation, leading to reduced NAD(+) hydrolase activity." evidence="16">
    <original>S</original>
    <variation>A</variation>
    <location>
        <position position="548"/>
    </location>
</feature>
<feature type="mutagenesis site" description="Loss of NAD(+) hydrolase activity." evidence="19">
    <original>Y</original>
    <variation>A</variation>
    <location>
        <position position="568"/>
    </location>
</feature>
<feature type="mutagenesis site" description="Loss of NAD(+) hydrolase activity." evidence="19">
    <original>RR</original>
    <variation>AA</variation>
    <location>
        <begin position="569"/>
        <end position="570"/>
    </location>
</feature>
<feature type="mutagenesis site" description="Loss of NAD(+) hydrolase activity." evidence="19">
    <original>R</original>
    <variation>A</variation>
    <location>
        <position position="569"/>
    </location>
</feature>
<feature type="mutagenesis site" description="Reduced NAD(+) hydrolase activity." evidence="19">
    <original>L</original>
    <variation>A</variation>
    <location>
        <position position="579"/>
    </location>
</feature>
<feature type="mutagenesis site" description="Reduced NAD(+) hydrolase activity." evidence="19">
    <original>D</original>
    <variation>A</variation>
    <location>
        <position position="594"/>
    </location>
</feature>
<feature type="mutagenesis site" description="Loss of NAD(+) hydrolase activity. Abolished ability to promote axonal degeneration following injury." evidence="13 14 19">
    <original>E</original>
    <variation>K</variation>
    <location>
        <position position="596"/>
    </location>
</feature>
<feature type="mutagenesis site" description="Dominant negative mutant that blocks axon degeneration after axotomy." evidence="13">
    <original>K</original>
    <variation>E</variation>
    <location>
        <position position="597"/>
    </location>
</feature>
<feature type="mutagenesis site" description="Loss of NAD(+) hydrolase activity. Abolished ability to promote axonal degeneration following injury." evidence="13 14 19">
    <original>G</original>
    <variation>P</variation>
    <location>
        <position position="601"/>
    </location>
</feature>
<feature type="mutagenesis site" description="Does not affect ability to promote axonal degeneration following injury." evidence="13">
    <original>E</original>
    <variation>K</variation>
    <location>
        <position position="604"/>
    </location>
</feature>
<feature type="mutagenesis site" description="Does not affect ability to promote axonal degeneration following injury." evidence="13">
    <original>L</original>
    <variation>M</variation>
    <location>
        <position position="626"/>
    </location>
</feature>
<feature type="mutagenesis site" description="Abolished ability to promote axonal degeneration following injury." evidence="13">
    <original>D</original>
    <variation>K</variation>
    <location>
        <position position="627"/>
    </location>
</feature>
<feature type="mutagenesis site" description="Abolished ability to promote axonal degeneration following injury." evidence="13">
    <original>K</original>
    <variation>D</variation>
    <location>
        <position position="628"/>
    </location>
</feature>
<feature type="mutagenesis site" description="Abolished NAD(+) hydrolase activity." evidence="23">
    <original>C</original>
    <variation>A</variation>
    <location>
        <position position="629"/>
    </location>
</feature>
<feature type="mutagenesis site" description="Abolished ability to promote axonal degeneration following injury." evidence="13">
    <original>C</original>
    <variation>S</variation>
    <location>
        <position position="629"/>
    </location>
</feature>
<feature type="mutagenesis site" description="Does not affect ability to promote axonal degeneration following injury." evidence="13">
    <original>D</original>
    <variation>K</variation>
    <location>
        <position position="632"/>
    </location>
</feature>
<feature type="mutagenesis site" description="Abolished NAD(+) hydrolase activity." evidence="23">
    <original>C</original>
    <variation>A</variation>
    <location>
        <position position="635"/>
    </location>
</feature>
<feature type="mutagenesis site" description="Loss of NAD(+) hydrolase activity." evidence="14 17 19 20 24">
    <original>E</original>
    <variation>K</variation>
    <location>
        <position position="642"/>
    </location>
</feature>
<feature type="mutagenesis site" description="Reduced NAD(+) hydrolase activity." evidence="19">
    <original>H</original>
    <variation>A</variation>
    <location>
        <position position="685"/>
    </location>
</feature>
<feature type="helix" evidence="52">
    <location>
        <begin position="63"/>
        <end position="81"/>
    </location>
</feature>
<feature type="helix" evidence="52">
    <location>
        <begin position="86"/>
        <end position="103"/>
    </location>
</feature>
<feature type="strand" evidence="51">
    <location>
        <begin position="106"/>
        <end position="108"/>
    </location>
</feature>
<feature type="helix" evidence="52">
    <location>
        <begin position="109"/>
        <end position="122"/>
    </location>
</feature>
<feature type="helix" evidence="52">
    <location>
        <begin position="125"/>
        <end position="132"/>
    </location>
</feature>
<feature type="helix" evidence="52">
    <location>
        <begin position="139"/>
        <end position="151"/>
    </location>
</feature>
<feature type="helix" evidence="52">
    <location>
        <begin position="156"/>
        <end position="162"/>
    </location>
</feature>
<feature type="turn" evidence="52">
    <location>
        <begin position="163"/>
        <end position="166"/>
    </location>
</feature>
<feature type="helix" evidence="52">
    <location>
        <begin position="167"/>
        <end position="171"/>
    </location>
</feature>
<feature type="helix" evidence="52">
    <location>
        <begin position="178"/>
        <end position="191"/>
    </location>
</feature>
<feature type="helix" evidence="52">
    <location>
        <begin position="196"/>
        <end position="204"/>
    </location>
</feature>
<feature type="turn" evidence="52">
    <location>
        <begin position="205"/>
        <end position="207"/>
    </location>
</feature>
<feature type="helix" evidence="52">
    <location>
        <begin position="208"/>
        <end position="214"/>
    </location>
</feature>
<feature type="helix" evidence="52">
    <location>
        <begin position="222"/>
        <end position="235"/>
    </location>
</feature>
<feature type="helix" evidence="52">
    <location>
        <begin position="239"/>
        <end position="247"/>
    </location>
</feature>
<feature type="turn" evidence="52">
    <location>
        <begin position="248"/>
        <end position="254"/>
    </location>
</feature>
<feature type="helix" evidence="52">
    <location>
        <begin position="255"/>
        <end position="259"/>
    </location>
</feature>
<feature type="helix" evidence="52">
    <location>
        <begin position="265"/>
        <end position="278"/>
    </location>
</feature>
<feature type="turn" evidence="52">
    <location>
        <begin position="281"/>
        <end position="283"/>
    </location>
</feature>
<feature type="helix" evidence="52">
    <location>
        <begin position="284"/>
        <end position="290"/>
    </location>
</feature>
<feature type="turn" evidence="53">
    <location>
        <begin position="291"/>
        <end position="295"/>
    </location>
</feature>
<feature type="helix" evidence="52">
    <location>
        <begin position="296"/>
        <end position="302"/>
    </location>
</feature>
<feature type="helix" evidence="52">
    <location>
        <begin position="305"/>
        <end position="308"/>
    </location>
</feature>
<feature type="turn" evidence="52">
    <location>
        <begin position="309"/>
        <end position="311"/>
    </location>
</feature>
<feature type="strand" evidence="51">
    <location>
        <begin position="313"/>
        <end position="316"/>
    </location>
</feature>
<feature type="turn" evidence="51">
    <location>
        <begin position="317"/>
        <end position="320"/>
    </location>
</feature>
<feature type="helix" evidence="52">
    <location>
        <begin position="324"/>
        <end position="327"/>
    </location>
</feature>
<feature type="turn" evidence="52">
    <location>
        <begin position="328"/>
        <end position="330"/>
    </location>
</feature>
<feature type="turn" evidence="52">
    <location>
        <begin position="332"/>
        <end position="334"/>
    </location>
</feature>
<feature type="strand" evidence="54">
    <location>
        <begin position="335"/>
        <end position="337"/>
    </location>
</feature>
<feature type="helix" evidence="52">
    <location>
        <begin position="339"/>
        <end position="358"/>
    </location>
</feature>
<feature type="helix" evidence="52">
    <location>
        <begin position="363"/>
        <end position="368"/>
    </location>
</feature>
<feature type="helix" evidence="52">
    <location>
        <begin position="370"/>
        <end position="379"/>
    </location>
</feature>
<feature type="helix" evidence="50">
    <location>
        <begin position="395"/>
        <end position="397"/>
    </location>
</feature>
<feature type="strand" evidence="50">
    <location>
        <begin position="398"/>
        <end position="401"/>
    </location>
</feature>
<feature type="helix" evidence="50">
    <location>
        <begin position="409"/>
        <end position="411"/>
    </location>
</feature>
<feature type="helix" evidence="50">
    <location>
        <begin position="414"/>
        <end position="423"/>
    </location>
</feature>
<feature type="helix" evidence="50">
    <location>
        <begin position="427"/>
        <end position="429"/>
    </location>
</feature>
<feature type="helix" evidence="50">
    <location>
        <begin position="430"/>
        <end position="435"/>
    </location>
</feature>
<feature type="helix" evidence="50">
    <location>
        <begin position="440"/>
        <end position="444"/>
    </location>
</feature>
<feature type="helix" evidence="50">
    <location>
        <begin position="448"/>
        <end position="453"/>
    </location>
</feature>
<feature type="helix" evidence="50">
    <location>
        <begin position="460"/>
        <end position="475"/>
    </location>
</feature>
<feature type="turn" evidence="50">
    <location>
        <begin position="480"/>
        <end position="482"/>
    </location>
</feature>
<feature type="helix" evidence="50">
    <location>
        <begin position="487"/>
        <end position="494"/>
    </location>
</feature>
<feature type="helix" evidence="50">
    <location>
        <begin position="496"/>
        <end position="501"/>
    </location>
</feature>
<feature type="helix" evidence="50">
    <location>
        <begin position="502"/>
        <end position="507"/>
    </location>
</feature>
<feature type="helix" evidence="50">
    <location>
        <begin position="512"/>
        <end position="515"/>
    </location>
</feature>
<feature type="helix" evidence="50">
    <location>
        <begin position="520"/>
        <end position="525"/>
    </location>
</feature>
<feature type="helix" evidence="50">
    <location>
        <begin position="532"/>
        <end position="543"/>
    </location>
</feature>
<feature type="strand" evidence="56">
    <location>
        <begin position="563"/>
        <end position="567"/>
    </location>
</feature>
<feature type="helix" evidence="56">
    <location>
        <begin position="570"/>
        <end position="586"/>
    </location>
</feature>
<feature type="strand" evidence="49">
    <location>
        <begin position="591"/>
        <end position="593"/>
    </location>
</feature>
<feature type="helix" evidence="56">
    <location>
        <begin position="594"/>
        <end position="597"/>
    </location>
</feature>
<feature type="helix" evidence="56">
    <location>
        <begin position="603"/>
        <end position="613"/>
    </location>
</feature>
<feature type="strand" evidence="56">
    <location>
        <begin position="615"/>
        <end position="621"/>
    </location>
</feature>
<feature type="turn" evidence="56">
    <location>
        <begin position="623"/>
        <end position="626"/>
    </location>
</feature>
<feature type="helix" evidence="56">
    <location>
        <begin position="627"/>
        <end position="629"/>
    </location>
</feature>
<feature type="strand" evidence="54">
    <location>
        <begin position="634"/>
        <end position="637"/>
    </location>
</feature>
<feature type="helix" evidence="56">
    <location>
        <begin position="638"/>
        <end position="648"/>
    </location>
</feature>
<feature type="strand" evidence="56">
    <location>
        <begin position="652"/>
        <end position="659"/>
    </location>
</feature>
<feature type="helix" evidence="56">
    <location>
        <begin position="665"/>
        <end position="667"/>
    </location>
</feature>
<feature type="helix" evidence="56">
    <location>
        <begin position="670"/>
        <end position="677"/>
    </location>
</feature>
<feature type="strand" evidence="55">
    <location>
        <begin position="685"/>
        <end position="687"/>
    </location>
</feature>
<feature type="helix" evidence="56">
    <location>
        <begin position="688"/>
        <end position="698"/>
    </location>
</feature>
<feature type="helix" evidence="54">
    <location>
        <begin position="701"/>
        <end position="703"/>
    </location>
</feature>
<proteinExistence type="evidence at protein level"/>
<gene>
    <name evidence="28 32 37" type="primary">SARM1</name>
    <name evidence="31" type="synonym">KIAA0524</name>
    <name evidence="37" type="synonym">SAMD2</name>
    <name evidence="25" type="synonym">SARM</name>
</gene>
<comment type="function">
    <text evidence="1 7 8 10 12 13 14 15 16 17 19 20 21 23 24">NAD(+) hydrolase, which plays a key role in axonal degeneration following injury by regulating NAD(+) metabolism (PubMed:25908823, PubMed:27671644, PubMed:28334607). Acts as a negative regulator of MYD88- and TRIF-dependent toll-like receptor signaling pathway by promoting Wallerian degeneration, an injury-induced form of programmed subcellular death which involves degeneration of an axon distal to the injury site (PubMed:15123841, PubMed:16964262, PubMed:20306472, PubMed:25908823). Wallerian degeneration is triggered by NAD(+) depletion: in response to injury, SARM1 is activated and catalyzes cleavage of NAD(+) into ADP-D-ribose (ADPR), cyclic ADPR (cADPR) and nicotinamide; NAD(+) cleavage promoting cytoskeletal degradation and axon destruction (PubMed:25908823, PubMed:28334607, PubMed:30333228, PubMed:31128467, PubMed:31439792, PubMed:31439793, PubMed:32049506, PubMed:32828421, PubMed:33053563). Also able to hydrolyze NADP(+), but not other NAD(+)-related molecules (PubMed:29395922). Can activate neuronal cell death in response to stress (PubMed:20306472). Regulates dendritic arborization through the MAPK4-JNK pathway (By similarity). Involved in innate immune response: inhibits both TICAM1/TRIF- and MYD88-dependent activation of JUN/AP-1, TRIF-dependent activation of NF-kappa-B and IRF3, and the phosphorylation of MAPK14/p38 (PubMed:16964262).</text>
</comment>
<comment type="catalytic activity">
    <reaction evidence="14 16 17 19 20 21 23 24">
        <text>NAD(+) + H2O = ADP-D-ribose + nicotinamide + H(+)</text>
        <dbReference type="Rhea" id="RHEA:16301"/>
        <dbReference type="ChEBI" id="CHEBI:15377"/>
        <dbReference type="ChEBI" id="CHEBI:15378"/>
        <dbReference type="ChEBI" id="CHEBI:17154"/>
        <dbReference type="ChEBI" id="CHEBI:57540"/>
        <dbReference type="ChEBI" id="CHEBI:57967"/>
        <dbReference type="EC" id="3.2.2.6"/>
    </reaction>
    <physiologicalReaction direction="left-to-right" evidence="14 16 17 19 20 21 23 24">
        <dbReference type="Rhea" id="RHEA:16302"/>
    </physiologicalReaction>
</comment>
<comment type="catalytic activity">
    <reaction evidence="14 17">
        <text>NAD(+) = cyclic ADP-beta-D-ribose + nicotinamide + H(+)</text>
        <dbReference type="Rhea" id="RHEA:38611"/>
        <dbReference type="ChEBI" id="CHEBI:15378"/>
        <dbReference type="ChEBI" id="CHEBI:17154"/>
        <dbReference type="ChEBI" id="CHEBI:57540"/>
        <dbReference type="ChEBI" id="CHEBI:73672"/>
    </reaction>
    <physiologicalReaction direction="left-to-right" evidence="14 17">
        <dbReference type="Rhea" id="RHEA:38612"/>
    </physiologicalReaction>
</comment>
<comment type="catalytic activity">
    <reaction evidence="15">
        <text>NADP(+) + H2O = ADP-D-ribose 2'-phosphate + nicotinamide + H(+)</text>
        <dbReference type="Rhea" id="RHEA:19849"/>
        <dbReference type="ChEBI" id="CHEBI:15377"/>
        <dbReference type="ChEBI" id="CHEBI:15378"/>
        <dbReference type="ChEBI" id="CHEBI:17154"/>
        <dbReference type="ChEBI" id="CHEBI:58349"/>
        <dbReference type="ChEBI" id="CHEBI:58673"/>
    </reaction>
    <physiologicalReaction direction="left-to-right" evidence="15">
        <dbReference type="Rhea" id="RHEA:19850"/>
    </physiologicalReaction>
</comment>
<comment type="activity regulation">
    <text evidence="13 14 17 18 19 22 23 24">Autoinhibited: in the inactive state, the enzymatic TIR domain is held apart by the autoinhibiting ARM repeats (PubMed:27671644, PubMed:31278906, PubMed:32755591, PubMed:33053563). NAD(+)-binding to ARM repeats maintains an inactive state by promoting interaction between ARM repeats and the TIR domain, thereby facilitating inhibition of the enzymatic TIR domain (PubMed:33053563). Following activation, possibly by nicotinamide mononucleotide (NMN), auto-inhibitory interactions are released, allowing self-association of the TIR domains and subsequent activation of the NAD(+) hydrolase (NADase) activity (PubMed:27671644, PubMed:31128467, PubMed:32755591). Self-association of TIR domains is facilitated by the octamer of SAM domains (PubMed:31278906, PubMed:31439792). NAD(+) hydrolase activity is inhibited by nicotinamide (PubMed:28334607). Specifically inhibited by berberine chloride and zinc chloride (PubMed:32828421).</text>
</comment>
<comment type="biophysicochemical properties">
    <kinetics>
        <KM evidence="14">24 uM for NAD(+)</KM>
        <text evidence="14">kcat is 10.3 min(-1) with NAD(+) as substrate.</text>
    </kinetics>
</comment>
<comment type="subunit">
    <text evidence="1 8 18 19 22 24">Homooctamer; forms an octameric ring via SAM domains (PubMed:31278906, PubMed:31439792, PubMed:32755591, PubMed:33053563). Interacts with TICAM1/TRIF and thereby interferes with TICAM1/TRIF function (PubMed:16964262). Interacts with MAPK10/JNK3 and SDC2 (via cytoplasmic domain) (By similarity).</text>
</comment>
<comment type="interaction">
    <interactant intactId="EBI-11693532">
        <id>Q6SZW1</id>
    </interactant>
    <interactant intactId="EBI-447677">
        <id>Q99836</id>
        <label>MYD88</label>
    </interactant>
    <organismsDiffer>false</organismsDiffer>
    <experiments>5</experiments>
</comment>
<comment type="interaction">
    <interactant intactId="EBI-11693532">
        <id>Q6SZW1</id>
    </interactant>
    <interactant intactId="EBI-525927">
        <id>Q86XR7</id>
        <label>TICAM2</label>
    </interactant>
    <organismsDiffer>false</organismsDiffer>
    <experiments>2</experiments>
</comment>
<comment type="interaction">
    <interactant intactId="EBI-22054385">
        <id>Q6SZW1-1</id>
    </interactant>
    <interactant intactId="EBI-22054385">
        <id>Q6SZW1-1</id>
        <label>SARM1</label>
    </interactant>
    <organismsDiffer>false</organismsDiffer>
    <experiments>3</experiments>
</comment>
<comment type="subcellular location">
    <subcellularLocation>
        <location evidence="10">Cytoplasm</location>
    </subcellularLocation>
    <subcellularLocation>
        <location evidence="1">Cell projection</location>
        <location evidence="1">Axon</location>
    </subcellularLocation>
    <subcellularLocation>
        <location evidence="1">Cell projection</location>
        <location evidence="1">Dendrite</location>
    </subcellularLocation>
    <subcellularLocation>
        <location evidence="1">Synapse</location>
    </subcellularLocation>
    <subcellularLocation>
        <location evidence="10 11">Mitochondrion</location>
    </subcellularLocation>
    <text evidence="1">Associated with microtubules.</text>
</comment>
<comment type="alternative products">
    <event type="alternative splicing"/>
    <isoform>
        <id>Q6SZW1-1</id>
        <name>1</name>
        <sequence type="displayed"/>
    </isoform>
    <isoform>
        <id>Q6SZW1-2</id>
        <name>2</name>
        <sequence type="described" ref="VSP_013603"/>
    </isoform>
</comment>
<comment type="tissue specificity">
    <text evidence="6 9">Predominantly expressed in brain, kidney and liver. Expressed at lower level in placenta.</text>
</comment>
<comment type="induction">
    <text evidence="10">Up-regulated by lipopolysaccharides (LPS).</text>
</comment>
<comment type="domain">
    <text evidence="13 14 18">The TIR domain mediates NAD(+) hydrolase (NADase) activity (PubMed:28334607). Self-association of TIR domains is required for NADase activity (PubMed:27671644, PubMed:31278906).</text>
</comment>
<comment type="domain">
    <text evidence="24">The ARM repeats inhibit the NAD(+) hydrolase (NADase) activity by binding to NAD(+): NAD(+)-binding to ARM repeats facilitates inhibition of the TIR domain NADase through their domain interface (PubMed:33053563). In contrast to classical ARM repeats, the last helix of ARM 6 does not fold back to interact with the first two helices, but instead turns towards the N-terminus of SARM1 (PubMed:33053563). As a result, the two following motifs ARM 7 and ARM 8 reverse their directions and lie perpendicularly (PubMed:33053563). Moreover, ARM repeats interact with different domains not only within each protomer but also of the adjacent ones (PubMed:33053563).</text>
</comment>
<comment type="PTM">
    <text evidence="16">Phosphorylation at Ser-548 by JNK kinases (MAPK8, MAPK9 and /or MAPK10) enhance the NAD(+) hydrolase (NADase) activity (PubMed:30333228). Phosphorylation at Ser-548 and subsequent activation takes place in response to oxidative stress conditions and inhibits mitochondrial respiration (PubMed:30333228).</text>
</comment>
<comment type="similarity">
    <text evidence="33">Belongs to the SARM1 family.</text>
</comment>